<proteinExistence type="evidence at protein level"/>
<keyword id="KW-0025">Alternative splicing</keyword>
<keyword id="KW-0150">Chloroplast</keyword>
<keyword id="KW-0378">Hydrolase</keyword>
<keyword id="KW-0442">Lipid degradation</keyword>
<keyword id="KW-0443">Lipid metabolism</keyword>
<keyword id="KW-0934">Plastid</keyword>
<keyword id="KW-1185">Reference proteome</keyword>
<keyword id="KW-0809">Transit peptide</keyword>
<comment type="function">
    <text evidence="4">Acylhydrolase with broad specificity (PubMed:19527719). Catalyzes the hydrolysis of phosphatidylcholine at the sn-1 position (PubMed:19527719). Possesses moderate activity toward phosphatidylcholine (PC), monogalactosyldiacylglycerol (MGDG), digalactosyldiacylglycerol (DGDG) and triacylglycerol (TAG) (PubMed:19527719).</text>
</comment>
<comment type="catalytic activity">
    <reaction evidence="4">
        <text>1,2-dihexadecanoyl-sn-glycero-3-phosphocholine + H2O = 2-hexadecanoyl-sn-glycero-3-phosphocholine + hexadecanoate + H(+)</text>
        <dbReference type="Rhea" id="RHEA:40487"/>
        <dbReference type="ChEBI" id="CHEBI:7896"/>
        <dbReference type="ChEBI" id="CHEBI:15377"/>
        <dbReference type="ChEBI" id="CHEBI:15378"/>
        <dbReference type="ChEBI" id="CHEBI:72999"/>
        <dbReference type="ChEBI" id="CHEBI:76078"/>
    </reaction>
    <physiologicalReaction direction="left-to-right" evidence="4">
        <dbReference type="Rhea" id="RHEA:40488"/>
    </physiologicalReaction>
</comment>
<comment type="catalytic activity">
    <reaction evidence="4">
        <text>a 1,2-diacyl-3-O-(beta-D-galactosyl)-sn-glycerol + H2O = an acyl-3-O-(beta-D-galactosyl)-sn-glycerol + a fatty acid + H(+)</text>
        <dbReference type="Rhea" id="RHEA:57084"/>
        <dbReference type="ChEBI" id="CHEBI:15377"/>
        <dbReference type="ChEBI" id="CHEBI:15378"/>
        <dbReference type="ChEBI" id="CHEBI:17615"/>
        <dbReference type="ChEBI" id="CHEBI:28868"/>
        <dbReference type="ChEBI" id="CHEBI:141434"/>
    </reaction>
    <physiologicalReaction direction="left-to-right" evidence="4">
        <dbReference type="Rhea" id="RHEA:57085"/>
    </physiologicalReaction>
</comment>
<comment type="catalytic activity">
    <reaction evidence="4">
        <text>a 1,2-diacyl-3-O-[alpha-D-galactosyl-(1-&gt;6)-beta-D-galactosyl]-sn-glycerol + H2O = acyl-3-O-[alpha-D-galactosyl-(1-&gt;6)-beta-D-galactosyl]-sn-glycerol + a fatty acid + H(+)</text>
        <dbReference type="Rhea" id="RHEA:48372"/>
        <dbReference type="ChEBI" id="CHEBI:15377"/>
        <dbReference type="ChEBI" id="CHEBI:15378"/>
        <dbReference type="ChEBI" id="CHEBI:28396"/>
        <dbReference type="ChEBI" id="CHEBI:28868"/>
        <dbReference type="ChEBI" id="CHEBI:90310"/>
    </reaction>
    <physiologicalReaction direction="left-to-right" evidence="4">
        <dbReference type="Rhea" id="RHEA:48373"/>
    </physiologicalReaction>
</comment>
<comment type="catalytic activity">
    <reaction evidence="4">
        <text>a triacylglycerol + H2O = a diacylglycerol + a fatty acid + H(+)</text>
        <dbReference type="Rhea" id="RHEA:12044"/>
        <dbReference type="ChEBI" id="CHEBI:15377"/>
        <dbReference type="ChEBI" id="CHEBI:15378"/>
        <dbReference type="ChEBI" id="CHEBI:17855"/>
        <dbReference type="ChEBI" id="CHEBI:18035"/>
        <dbReference type="ChEBI" id="CHEBI:28868"/>
    </reaction>
    <physiologicalReaction direction="left-to-right" evidence="4">
        <dbReference type="Rhea" id="RHEA:12045"/>
    </physiologicalReaction>
</comment>
<comment type="subunit">
    <text evidence="7">Interacts with SBP1.</text>
</comment>
<comment type="subcellular location">
    <subcellularLocation>
        <location evidence="4 7">Plastid</location>
        <location evidence="4 7">Chloroplast</location>
    </subcellularLocation>
</comment>
<comment type="alternative products">
    <event type="alternative splicing"/>
    <isoform>
        <id>Q3EBR6-1</id>
        <name>1</name>
        <sequence type="displayed"/>
    </isoform>
    <isoform>
        <id>Q3EBR6-2</id>
        <name>2</name>
        <sequence type="described" ref="VSP_039821 VSP_039822"/>
    </isoform>
</comment>
<comment type="tissue specificity">
    <text evidence="4">Widely expressed (PubMed:19527719). Highly expressed in leaves and stems (PubMed:19527719).</text>
</comment>
<comment type="induction">
    <text evidence="3 6 7">Slightly induced by wounding (PubMed:18267087). Induced by wounding (PubMed:24430866, PubMed:31928671). Induced by cadmium and selenium in roots (PubMed:31928671).</text>
</comment>
<comment type="disruption phenotype">
    <text evidence="5">No visible phenotype under normal growth conditions.</text>
</comment>
<comment type="miscellaneous">
    <molecule>Isoform 2</molecule>
    <text evidence="10">Major isoform.</text>
</comment>
<comment type="similarity">
    <text evidence="10">Belongs to the AB hydrolase superfamily. Lipase family.</text>
</comment>
<sequence>MAAIPSHNNLLTINHKNSITGSSSLNTNFSEINFPAKFRVATRALSRTDESSLSAVISRLERERRERQGLLIEEAEGAGELWMTAEDIRRRDKKTEEERRLRDTWRKIQGEDDWAGLMDPMDPILRSELIRYGEMAQACYDAFDFDPASKYCGTSRFTRLEFFDSLGMIDSGYEVARYLYATSNINLPNFFSKSRWSKVWSKNANWMGYVAVSDDETSRNRLGRRDIAIAWRGTVTKLEWIADLKDYLKPVTENKIRCPDPAVKVESGFLDLYTDKDTTCKFARFSAREQILTEVKRLVEEHGDDDDSDLSITVTGHSLGGALAILSAYDIAEMRLNRSKKGKVIPVTVLTYGGPRVGNVRFRERMEELGVKVMRVVNVHDVVPKSPGLFLNESRPHALMKIAEGLPWCYSHVGEELALDHQNSPFLKPSVDVSTAHNLEAMLHLLDGYHGKGERFVLSSGRDHALVNKASDFLKEHLQIPPFWRQDANKGMVRNSEGRWIQAERLRFEDHHSPDIHHHLSQLRLDHPC</sequence>
<accession>Q3EBR6</accession>
<accession>O04340</accession>
<dbReference type="EC" id="3.1.1.-" evidence="4"/>
<dbReference type="EMBL" id="U93215">
    <property type="protein sequence ID" value="AAB63082.2"/>
    <property type="molecule type" value="Genomic_DNA"/>
</dbReference>
<dbReference type="EMBL" id="CP002685">
    <property type="protein sequence ID" value="AEC08407.1"/>
    <property type="molecule type" value="Genomic_DNA"/>
</dbReference>
<dbReference type="EMBL" id="AY091143">
    <property type="protein sequence ID" value="AAM14092.1"/>
    <property type="molecule type" value="mRNA"/>
</dbReference>
<dbReference type="EMBL" id="AY142594">
    <property type="protein sequence ID" value="AAN13163.1"/>
    <property type="molecule type" value="mRNA"/>
</dbReference>
<dbReference type="EMBL" id="AY086021">
    <property type="protein sequence ID" value="AAM63231.1"/>
    <property type="molecule type" value="mRNA"/>
</dbReference>
<dbReference type="PIR" id="G84709">
    <property type="entry name" value="G84709"/>
</dbReference>
<dbReference type="RefSeq" id="NP_565701.1">
    <molecule id="Q3EBR6-1"/>
    <property type="nucleotide sequence ID" value="NM_128607.4"/>
</dbReference>
<dbReference type="SMR" id="Q3EBR6"/>
<dbReference type="FunCoup" id="Q3EBR6">
    <property type="interactions" value="60"/>
</dbReference>
<dbReference type="STRING" id="3702.Q3EBR6"/>
<dbReference type="SwissLipids" id="SLP:000001920">
    <molecule id="Q3EBR6-1"/>
</dbReference>
<dbReference type="ESTHER" id="arath-PLA16">
    <property type="family name" value="Plant_phospholipase"/>
</dbReference>
<dbReference type="PaxDb" id="3702-AT2G30550.2"/>
<dbReference type="ProteomicsDB" id="236165">
    <molecule id="Q3EBR6-1"/>
</dbReference>
<dbReference type="EnsemblPlants" id="AT2G30550.2">
    <molecule id="Q3EBR6-1"/>
    <property type="protein sequence ID" value="AT2G30550.2"/>
    <property type="gene ID" value="AT2G30550"/>
</dbReference>
<dbReference type="GeneID" id="817604"/>
<dbReference type="Gramene" id="AT2G30550.2">
    <molecule id="Q3EBR6-1"/>
    <property type="protein sequence ID" value="AT2G30550.2"/>
    <property type="gene ID" value="AT2G30550"/>
</dbReference>
<dbReference type="KEGG" id="ath:AT2G30550"/>
<dbReference type="Araport" id="AT2G30550"/>
<dbReference type="TAIR" id="AT2G30550">
    <property type="gene designation" value="DALL3"/>
</dbReference>
<dbReference type="eggNOG" id="KOG4569">
    <property type="taxonomic scope" value="Eukaryota"/>
</dbReference>
<dbReference type="HOGENOM" id="CLU_018841_0_0_1"/>
<dbReference type="InParanoid" id="Q3EBR6"/>
<dbReference type="OrthoDB" id="438440at2759"/>
<dbReference type="PhylomeDB" id="Q3EBR6"/>
<dbReference type="BioCyc" id="ARA:AT2G30550-MONOMER"/>
<dbReference type="PRO" id="PR:Q3EBR6"/>
<dbReference type="Proteomes" id="UP000006548">
    <property type="component" value="Chromosome 2"/>
</dbReference>
<dbReference type="ExpressionAtlas" id="Q3EBR6">
    <property type="expression patterns" value="baseline and differential"/>
</dbReference>
<dbReference type="GO" id="GO:0009507">
    <property type="term" value="C:chloroplast"/>
    <property type="evidence" value="ECO:0000314"/>
    <property type="project" value="TAIR"/>
</dbReference>
<dbReference type="GO" id="GO:0047714">
    <property type="term" value="F:galactolipase activity"/>
    <property type="evidence" value="ECO:0000314"/>
    <property type="project" value="TAIR"/>
</dbReference>
<dbReference type="GO" id="GO:0008970">
    <property type="term" value="F:phospholipase A1 activity"/>
    <property type="evidence" value="ECO:0000314"/>
    <property type="project" value="TAIR"/>
</dbReference>
<dbReference type="GO" id="GO:0004806">
    <property type="term" value="F:triacylglycerol lipase activity"/>
    <property type="evidence" value="ECO:0000314"/>
    <property type="project" value="TAIR"/>
</dbReference>
<dbReference type="GO" id="GO:0016042">
    <property type="term" value="P:lipid catabolic process"/>
    <property type="evidence" value="ECO:0007669"/>
    <property type="project" value="UniProtKB-KW"/>
</dbReference>
<dbReference type="CDD" id="cd00519">
    <property type="entry name" value="Lipase_3"/>
    <property type="match status" value="1"/>
</dbReference>
<dbReference type="FunFam" id="3.40.50.1820:FF:000065">
    <property type="entry name" value="Phospholipase A1-II 3"/>
    <property type="match status" value="1"/>
</dbReference>
<dbReference type="Gene3D" id="3.40.50.1820">
    <property type="entry name" value="alpha/beta hydrolase"/>
    <property type="match status" value="1"/>
</dbReference>
<dbReference type="InterPro" id="IPR029058">
    <property type="entry name" value="AB_hydrolase_fold"/>
</dbReference>
<dbReference type="InterPro" id="IPR002921">
    <property type="entry name" value="Fungal_lipase-type"/>
</dbReference>
<dbReference type="PANTHER" id="PTHR31403">
    <property type="entry name" value="PHOSPHOLIPASE A1-IBETA2, CHLOROPLASTIC"/>
    <property type="match status" value="1"/>
</dbReference>
<dbReference type="PANTHER" id="PTHR31403:SF51">
    <property type="entry name" value="PHOSPHOLIPASE A1-IGAMMA2, CHLOROPLASTIC"/>
    <property type="match status" value="1"/>
</dbReference>
<dbReference type="Pfam" id="PF01764">
    <property type="entry name" value="Lipase_3"/>
    <property type="match status" value="1"/>
</dbReference>
<dbReference type="SUPFAM" id="SSF53474">
    <property type="entry name" value="alpha/beta-Hydrolases"/>
    <property type="match status" value="1"/>
</dbReference>
<dbReference type="PROSITE" id="PS00120">
    <property type="entry name" value="LIPASE_SER"/>
    <property type="match status" value="1"/>
</dbReference>
<gene>
    <name evidence="9" type="primary">DALL3</name>
    <name evidence="11" type="ordered locus">At2g30550</name>
    <name evidence="12" type="ORF">T6B20.10</name>
</gene>
<protein>
    <recommendedName>
        <fullName evidence="8">Phospholipase A1-Igamma2, chloroplastic</fullName>
        <ecNumber evidence="4">3.1.1.-</ecNumber>
    </recommendedName>
    <alternativeName>
        <fullName evidence="9">DAD1-like lipase 3</fullName>
    </alternativeName>
</protein>
<evidence type="ECO:0000250" key="1">
    <source>
        <dbReference type="UniProtKB" id="Q948R1"/>
    </source>
</evidence>
<evidence type="ECO:0000255" key="2"/>
<evidence type="ECO:0000269" key="3">
    <source>
    </source>
</evidence>
<evidence type="ECO:0000269" key="4">
    <source>
    </source>
</evidence>
<evidence type="ECO:0000269" key="5">
    <source>
    </source>
</evidence>
<evidence type="ECO:0000269" key="6">
    <source>
    </source>
</evidence>
<evidence type="ECO:0000269" key="7">
    <source>
    </source>
</evidence>
<evidence type="ECO:0000303" key="8">
    <source>
    </source>
</evidence>
<evidence type="ECO:0000303" key="9">
    <source>
    </source>
</evidence>
<evidence type="ECO:0000305" key="10"/>
<evidence type="ECO:0000312" key="11">
    <source>
        <dbReference type="Araport" id="AT2G30550"/>
    </source>
</evidence>
<evidence type="ECO:0000312" key="12">
    <source>
        <dbReference type="EMBL" id="AAB63082.2"/>
    </source>
</evidence>
<feature type="transit peptide" description="Chloroplast" evidence="2">
    <location>
        <begin position="1"/>
        <end position="43"/>
    </location>
</feature>
<feature type="chain" id="PRO_0000398880" description="Phospholipase A1-Igamma2, chloroplastic">
    <location>
        <begin position="44"/>
        <end position="529"/>
    </location>
</feature>
<feature type="short sequence motif" description="GXSXG" evidence="1">
    <location>
        <begin position="316"/>
        <end position="320"/>
    </location>
</feature>
<feature type="active site" description="Acyl-ester intermediate" evidence="1">
    <location>
        <position position="318"/>
    </location>
</feature>
<feature type="active site" description="Charge relay system" evidence="1">
    <location>
        <position position="381"/>
    </location>
</feature>
<feature type="active site" description="Charge relay system" evidence="1">
    <location>
        <position position="437"/>
    </location>
</feature>
<feature type="splice variant" id="VSP_039821" description="In isoform 2." evidence="10">
    <original>HGKGERFVLSSGRDH</original>
    <variation>VSFLFYFSLFIYS</variation>
    <location>
        <begin position="450"/>
        <end position="464"/>
    </location>
</feature>
<feature type="splice variant" id="VSP_039822" description="In isoform 2." evidence="10">
    <location>
        <begin position="465"/>
        <end position="529"/>
    </location>
</feature>
<reference key="1">
    <citation type="journal article" date="1999" name="Nature">
        <title>Sequence and analysis of chromosome 2 of the plant Arabidopsis thaliana.</title>
        <authorList>
            <person name="Lin X."/>
            <person name="Kaul S."/>
            <person name="Rounsley S.D."/>
            <person name="Shea T.P."/>
            <person name="Benito M.-I."/>
            <person name="Town C.D."/>
            <person name="Fujii C.Y."/>
            <person name="Mason T.M."/>
            <person name="Bowman C.L."/>
            <person name="Barnstead M.E."/>
            <person name="Feldblyum T.V."/>
            <person name="Buell C.R."/>
            <person name="Ketchum K.A."/>
            <person name="Lee J.J."/>
            <person name="Ronning C.M."/>
            <person name="Koo H.L."/>
            <person name="Moffat K.S."/>
            <person name="Cronin L.A."/>
            <person name="Shen M."/>
            <person name="Pai G."/>
            <person name="Van Aken S."/>
            <person name="Umayam L."/>
            <person name="Tallon L.J."/>
            <person name="Gill J.E."/>
            <person name="Adams M.D."/>
            <person name="Carrera A.J."/>
            <person name="Creasy T.H."/>
            <person name="Goodman H.M."/>
            <person name="Somerville C.R."/>
            <person name="Copenhaver G.P."/>
            <person name="Preuss D."/>
            <person name="Nierman W.C."/>
            <person name="White O."/>
            <person name="Eisen J.A."/>
            <person name="Salzberg S.L."/>
            <person name="Fraser C.M."/>
            <person name="Venter J.C."/>
        </authorList>
    </citation>
    <scope>NUCLEOTIDE SEQUENCE [LARGE SCALE GENOMIC DNA]</scope>
    <source>
        <strain>cv. Columbia</strain>
    </source>
</reference>
<reference key="2">
    <citation type="journal article" date="2017" name="Plant J.">
        <title>Araport11: a complete reannotation of the Arabidopsis thaliana reference genome.</title>
        <authorList>
            <person name="Cheng C.Y."/>
            <person name="Krishnakumar V."/>
            <person name="Chan A.P."/>
            <person name="Thibaud-Nissen F."/>
            <person name="Schobel S."/>
            <person name="Town C.D."/>
        </authorList>
    </citation>
    <scope>GENOME REANNOTATION</scope>
    <source>
        <strain>cv. Columbia</strain>
    </source>
</reference>
<reference key="3">
    <citation type="journal article" date="2003" name="Science">
        <title>Empirical analysis of transcriptional activity in the Arabidopsis genome.</title>
        <authorList>
            <person name="Yamada K."/>
            <person name="Lim J."/>
            <person name="Dale J.M."/>
            <person name="Chen H."/>
            <person name="Shinn P."/>
            <person name="Palm C.J."/>
            <person name="Southwick A.M."/>
            <person name="Wu H.C."/>
            <person name="Kim C.J."/>
            <person name="Nguyen M."/>
            <person name="Pham P.K."/>
            <person name="Cheuk R.F."/>
            <person name="Karlin-Newmann G."/>
            <person name="Liu S.X."/>
            <person name="Lam B."/>
            <person name="Sakano H."/>
            <person name="Wu T."/>
            <person name="Yu G."/>
            <person name="Miranda M."/>
            <person name="Quach H.L."/>
            <person name="Tripp M."/>
            <person name="Chang C.H."/>
            <person name="Lee J.M."/>
            <person name="Toriumi M.J."/>
            <person name="Chan M.M."/>
            <person name="Tang C.C."/>
            <person name="Onodera C.S."/>
            <person name="Deng J.M."/>
            <person name="Akiyama K."/>
            <person name="Ansari Y."/>
            <person name="Arakawa T."/>
            <person name="Banh J."/>
            <person name="Banno F."/>
            <person name="Bowser L."/>
            <person name="Brooks S.Y."/>
            <person name="Carninci P."/>
            <person name="Chao Q."/>
            <person name="Choy N."/>
            <person name="Enju A."/>
            <person name="Goldsmith A.D."/>
            <person name="Gurjal M."/>
            <person name="Hansen N.F."/>
            <person name="Hayashizaki Y."/>
            <person name="Johnson-Hopson C."/>
            <person name="Hsuan V.W."/>
            <person name="Iida K."/>
            <person name="Karnes M."/>
            <person name="Khan S."/>
            <person name="Koesema E."/>
            <person name="Ishida J."/>
            <person name="Jiang P.X."/>
            <person name="Jones T."/>
            <person name="Kawai J."/>
            <person name="Kamiya A."/>
            <person name="Meyers C."/>
            <person name="Nakajima M."/>
            <person name="Narusaka M."/>
            <person name="Seki M."/>
            <person name="Sakurai T."/>
            <person name="Satou M."/>
            <person name="Tamse R."/>
            <person name="Vaysberg M."/>
            <person name="Wallender E.K."/>
            <person name="Wong C."/>
            <person name="Yamamura Y."/>
            <person name="Yuan S."/>
            <person name="Shinozaki K."/>
            <person name="Davis R.W."/>
            <person name="Theologis A."/>
            <person name="Ecker J.R."/>
        </authorList>
    </citation>
    <scope>NUCLEOTIDE SEQUENCE [LARGE SCALE MRNA] (ISOFORM 1)</scope>
    <source>
        <strain>cv. Columbia</strain>
    </source>
</reference>
<reference key="4">
    <citation type="submission" date="2002-03" db="EMBL/GenBank/DDBJ databases">
        <title>Full-length cDNA from Arabidopsis thaliana.</title>
        <authorList>
            <person name="Brover V.V."/>
            <person name="Troukhan M.E."/>
            <person name="Alexandrov N.A."/>
            <person name="Lu Y.-P."/>
            <person name="Flavell R.B."/>
            <person name="Feldmann K.A."/>
        </authorList>
    </citation>
    <scope>NUCLEOTIDE SEQUENCE [LARGE SCALE MRNA] (ISOFORM 1)</scope>
</reference>
<reference key="5">
    <citation type="journal article" date="2004" name="Trends Plant Sci.">
        <title>Phospholipid-derived signaling mediated by phospholipase A in plants.</title>
        <authorList>
            <person name="Ryu S.B."/>
        </authorList>
    </citation>
    <scope>GENE FAMILY</scope>
    <scope>NOMENCLATURE</scope>
</reference>
<reference key="6">
    <citation type="journal article" date="2008" name="Dev. Cell">
        <title>Cooperation and functional diversification of two closely related galactolipase genes for jasmonate biosynthesis.</title>
        <authorList>
            <person name="Hyun Y."/>
            <person name="Choi S."/>
            <person name="Hwang H.J."/>
            <person name="Yu J."/>
            <person name="Nam S.J."/>
            <person name="Ko J."/>
            <person name="Park J.Y."/>
            <person name="Seo Y.S."/>
            <person name="Kim E.Y."/>
            <person name="Ryu S.B."/>
            <person name="Kim W.T."/>
            <person name="Lee Y.H."/>
            <person name="Kang H."/>
            <person name="Lee I."/>
        </authorList>
    </citation>
    <scope>INDUCTION BY WOUNDING</scope>
</reference>
<reference key="7">
    <citation type="journal article" date="2009" name="FEBS Lett.">
        <title>Enzymatic characterization of class I DAD1-like acylhydrolase members targeted to chloroplast in Arabidopsis.</title>
        <authorList>
            <person name="Seo Y.S."/>
            <person name="Kim E.Y."/>
            <person name="Kim J.H."/>
            <person name="Kim W.T."/>
        </authorList>
    </citation>
    <scope>CATALYTIC ACTIVITY</scope>
    <scope>FUNCTION</scope>
    <scope>SUBCELLULAR LOCATION</scope>
    <scope>TISSUE SPECIFICITY</scope>
    <scope>ALTERNATIVE SPLICING</scope>
</reference>
<reference key="8">
    <citation type="journal article" date="2010" name="Plant Physiol.">
        <title>DONGLE and DEFECTIVE IN ANTHER DEHISCENCE1 lipases are not essential for wound- and pathogen-induced jasmonate biosynthesis: redundant lipases contribute to jasmonate formation.</title>
        <authorList>
            <person name="Ellinger D."/>
            <person name="Stingl N."/>
            <person name="Kubigsteltig I.I."/>
            <person name="Bals T."/>
            <person name="Juenger M."/>
            <person name="Pollmann S."/>
            <person name="Berger S."/>
            <person name="Schuenemann D."/>
            <person name="Mueller M.J."/>
        </authorList>
    </citation>
    <scope>DISRUPTION PHENOTYPE</scope>
</reference>
<reference key="9">
    <citation type="journal article" date="2014" name="Plant Cell Rep.">
        <title>Wound-induced expression of DEFECTIVE IN ANTHER DEHISCENCE1 and DAD1-like lipase genes is mediated by both CORONATINE INSENSITIVE1-dependent and independent pathways in Arabidopsis thaliana.</title>
        <authorList>
            <person name="Rudus I."/>
            <person name="Terai H."/>
            <person name="Shimizu T."/>
            <person name="Kojima H."/>
            <person name="Hattori K."/>
            <person name="Nishimori Y."/>
            <person name="Tsukagoshi H."/>
            <person name="Kamiya Y."/>
            <person name="Seo M."/>
            <person name="Nakamura K."/>
            <person name="Kepczynski J."/>
            <person name="Ishiguro S."/>
        </authorList>
    </citation>
    <scope>INDUCTION BY WOUNDING</scope>
</reference>
<reference key="10">
    <citation type="journal article" date="2020" name="Plant Sci.">
        <title>Investigation of the interaction of DAD1-LIKE LIPASE 3 (DALL3) with Selenium Binding Protein 1 (SBP1) in Arabidopsis thaliana.</title>
        <authorList>
            <person name="Dervisi I."/>
            <person name="Valassakis C."/>
            <person name="Agalou A."/>
            <person name="Papandreou N."/>
            <person name="Podia V."/>
            <person name="Haralampidis K."/>
            <person name="Iconomidou V.A."/>
            <person name="Kouvelis V.N."/>
            <person name="Spaink H.P."/>
            <person name="Roussis A."/>
        </authorList>
    </citation>
    <scope>INTERACTION WITH SBP1</scope>
    <scope>SUBCELLULAR LOCATION</scope>
    <scope>INDUCTION</scope>
</reference>
<organism>
    <name type="scientific">Arabidopsis thaliana</name>
    <name type="common">Mouse-ear cress</name>
    <dbReference type="NCBI Taxonomy" id="3702"/>
    <lineage>
        <taxon>Eukaryota</taxon>
        <taxon>Viridiplantae</taxon>
        <taxon>Streptophyta</taxon>
        <taxon>Embryophyta</taxon>
        <taxon>Tracheophyta</taxon>
        <taxon>Spermatophyta</taxon>
        <taxon>Magnoliopsida</taxon>
        <taxon>eudicotyledons</taxon>
        <taxon>Gunneridae</taxon>
        <taxon>Pentapetalae</taxon>
        <taxon>rosids</taxon>
        <taxon>malvids</taxon>
        <taxon>Brassicales</taxon>
        <taxon>Brassicaceae</taxon>
        <taxon>Camelineae</taxon>
        <taxon>Arabidopsis</taxon>
    </lineage>
</organism>
<name>PLA16_ARATH</name>